<gene>
    <name type="ordered locus">YDL158C</name>
</gene>
<accession>Q12047</accession>
<proteinExistence type="uncertain"/>
<feature type="chain" id="PRO_0000299858" description="Putative uncharacterized protein YDL158C">
    <location>
        <begin position="1"/>
        <end position="102"/>
    </location>
</feature>
<evidence type="ECO:0000305" key="1"/>
<evidence type="ECO:0000305" key="2">
    <source>
    </source>
</evidence>
<sequence length="102" mass="11987">MIIFKNIVTLENWFVIYIIRRVYIYMNIALRKGCEKKCNMFLTNVIACIQWVDLSDCFFSNLARSKASLLILLSSFILDFIFLHQCLNLSSLDGDTYFIIRS</sequence>
<protein>
    <recommendedName>
        <fullName>Putative uncharacterized protein YDL158C</fullName>
    </recommendedName>
</protein>
<dbReference type="EMBL" id="X97751">
    <property type="protein sequence ID" value="CAA66333.1"/>
    <property type="molecule type" value="Genomic_DNA"/>
</dbReference>
<dbReference type="EMBL" id="Z67750">
    <property type="protein sequence ID" value="CAA91588.1"/>
    <property type="molecule type" value="Genomic_DNA"/>
</dbReference>
<dbReference type="EMBL" id="Z74207">
    <property type="protein sequence ID" value="CAA98733.1"/>
    <property type="molecule type" value="Genomic_DNA"/>
</dbReference>
<dbReference type="PIR" id="S61055">
    <property type="entry name" value="S61055"/>
</dbReference>
<dbReference type="DIP" id="DIP-3878N"/>
<dbReference type="PaxDb" id="4932-YDL158C"/>
<dbReference type="EnsemblFungi" id="YDL158C_mRNA">
    <property type="protein sequence ID" value="YDL158C"/>
    <property type="gene ID" value="YDL158C"/>
</dbReference>
<dbReference type="AGR" id="SGD:S000002317"/>
<dbReference type="SGD" id="S000002317">
    <property type="gene designation" value="YDL158C"/>
</dbReference>
<dbReference type="HOGENOM" id="CLU_2279672_0_0_1"/>
<comment type="miscellaneous">
    <text evidence="1">Partially overlaps STE7.</text>
</comment>
<comment type="caution">
    <text evidence="2">Product of a dubious gene prediction unlikely to encode a functional protein. Because of that it is not part of the S.cerevisiae S288c complete/reference proteome set.</text>
</comment>
<organism>
    <name type="scientific">Saccharomyces cerevisiae (strain ATCC 204508 / S288c)</name>
    <name type="common">Baker's yeast</name>
    <dbReference type="NCBI Taxonomy" id="559292"/>
    <lineage>
        <taxon>Eukaryota</taxon>
        <taxon>Fungi</taxon>
        <taxon>Dikarya</taxon>
        <taxon>Ascomycota</taxon>
        <taxon>Saccharomycotina</taxon>
        <taxon>Saccharomycetes</taxon>
        <taxon>Saccharomycetales</taxon>
        <taxon>Saccharomycetaceae</taxon>
        <taxon>Saccharomyces</taxon>
    </lineage>
</organism>
<reference key="1">
    <citation type="journal article" date="1996" name="Yeast">
        <title>Analysis of a 23 kb region on the left arm of yeast chromosome IV.</title>
        <authorList>
            <person name="Delaveau T.T.D."/>
            <person name="Blugeon C."/>
            <person name="Jacq C."/>
            <person name="Perea J."/>
        </authorList>
    </citation>
    <scope>NUCLEOTIDE SEQUENCE [GENOMIC DNA]</scope>
</reference>
<reference key="2">
    <citation type="journal article" date="1997" name="Nature">
        <title>The nucleotide sequence of Saccharomyces cerevisiae chromosome IV.</title>
        <authorList>
            <person name="Jacq C."/>
            <person name="Alt-Moerbe J."/>
            <person name="Andre B."/>
            <person name="Arnold W."/>
            <person name="Bahr A."/>
            <person name="Ballesta J.P.G."/>
            <person name="Bargues M."/>
            <person name="Baron L."/>
            <person name="Becker A."/>
            <person name="Biteau N."/>
            <person name="Bloecker H."/>
            <person name="Blugeon C."/>
            <person name="Boskovic J."/>
            <person name="Brandt P."/>
            <person name="Brueckner M."/>
            <person name="Buitrago M.J."/>
            <person name="Coster F."/>
            <person name="Delaveau T."/>
            <person name="del Rey F."/>
            <person name="Dujon B."/>
            <person name="Eide L.G."/>
            <person name="Garcia-Cantalejo J.M."/>
            <person name="Goffeau A."/>
            <person name="Gomez-Peris A."/>
            <person name="Granotier C."/>
            <person name="Hanemann V."/>
            <person name="Hankeln T."/>
            <person name="Hoheisel J.D."/>
            <person name="Jaeger W."/>
            <person name="Jimenez A."/>
            <person name="Jonniaux J.-L."/>
            <person name="Kraemer C."/>
            <person name="Kuester H."/>
            <person name="Laamanen P."/>
            <person name="Legros Y."/>
            <person name="Louis E.J."/>
            <person name="Moeller-Rieker S."/>
            <person name="Monnet A."/>
            <person name="Moro M."/>
            <person name="Mueller-Auer S."/>
            <person name="Nussbaumer B."/>
            <person name="Paricio N."/>
            <person name="Paulin L."/>
            <person name="Perea J."/>
            <person name="Perez-Alonso M."/>
            <person name="Perez-Ortin J.E."/>
            <person name="Pohl T.M."/>
            <person name="Prydz H."/>
            <person name="Purnelle B."/>
            <person name="Rasmussen S.W."/>
            <person name="Remacha M.A."/>
            <person name="Revuelta J.L."/>
            <person name="Rieger M."/>
            <person name="Salom D."/>
            <person name="Saluz H.P."/>
            <person name="Saiz J.E."/>
            <person name="Saren A.-M."/>
            <person name="Schaefer M."/>
            <person name="Scharfe M."/>
            <person name="Schmidt E.R."/>
            <person name="Schneider C."/>
            <person name="Scholler P."/>
            <person name="Schwarz S."/>
            <person name="Soler-Mira A."/>
            <person name="Urrestarazu L.A."/>
            <person name="Verhasselt P."/>
            <person name="Vissers S."/>
            <person name="Voet M."/>
            <person name="Volckaert G."/>
            <person name="Wagner G."/>
            <person name="Wambutt R."/>
            <person name="Wedler E."/>
            <person name="Wedler H."/>
            <person name="Woelfl S."/>
            <person name="Harris D.E."/>
            <person name="Bowman S."/>
            <person name="Brown D."/>
            <person name="Churcher C.M."/>
            <person name="Connor R."/>
            <person name="Dedman K."/>
            <person name="Gentles S."/>
            <person name="Hamlin N."/>
            <person name="Hunt S."/>
            <person name="Jones L."/>
            <person name="McDonald S."/>
            <person name="Murphy L.D."/>
            <person name="Niblett D."/>
            <person name="Odell C."/>
            <person name="Oliver K."/>
            <person name="Rajandream M.A."/>
            <person name="Richards C."/>
            <person name="Shore L."/>
            <person name="Walsh S.V."/>
            <person name="Barrell B.G."/>
            <person name="Dietrich F.S."/>
            <person name="Mulligan J.T."/>
            <person name="Allen E."/>
            <person name="Araujo R."/>
            <person name="Aviles E."/>
            <person name="Berno A."/>
            <person name="Carpenter J."/>
            <person name="Chen E."/>
            <person name="Cherry J.M."/>
            <person name="Chung E."/>
            <person name="Duncan M."/>
            <person name="Hunicke-Smith S."/>
            <person name="Hyman R.W."/>
            <person name="Komp C."/>
            <person name="Lashkari D."/>
            <person name="Lew H."/>
            <person name="Lin D."/>
            <person name="Mosedale D."/>
            <person name="Nakahara K."/>
            <person name="Namath A."/>
            <person name="Oefner P."/>
            <person name="Oh C."/>
            <person name="Petel F.X."/>
            <person name="Roberts D."/>
            <person name="Schramm S."/>
            <person name="Schroeder M."/>
            <person name="Shogren T."/>
            <person name="Shroff N."/>
            <person name="Winant A."/>
            <person name="Yelton M.A."/>
            <person name="Botstein D."/>
            <person name="Davis R.W."/>
            <person name="Johnston M."/>
            <person name="Andrews S."/>
            <person name="Brinkman R."/>
            <person name="Cooper J."/>
            <person name="Ding H."/>
            <person name="Du Z."/>
            <person name="Favello A."/>
            <person name="Fulton L."/>
            <person name="Gattung S."/>
            <person name="Greco T."/>
            <person name="Hallsworth K."/>
            <person name="Hawkins J."/>
            <person name="Hillier L.W."/>
            <person name="Jier M."/>
            <person name="Johnson D."/>
            <person name="Johnston L."/>
            <person name="Kirsten J."/>
            <person name="Kucaba T."/>
            <person name="Langston Y."/>
            <person name="Latreille P."/>
            <person name="Le T."/>
            <person name="Mardis E."/>
            <person name="Menezes S."/>
            <person name="Miller N."/>
            <person name="Nhan M."/>
            <person name="Pauley A."/>
            <person name="Peluso D."/>
            <person name="Rifkin L."/>
            <person name="Riles L."/>
            <person name="Taich A."/>
            <person name="Trevaskis E."/>
            <person name="Vignati D."/>
            <person name="Wilcox L."/>
            <person name="Wohldman P."/>
            <person name="Vaudin M."/>
            <person name="Wilson R."/>
            <person name="Waterston R."/>
            <person name="Albermann K."/>
            <person name="Hani J."/>
            <person name="Heumann K."/>
            <person name="Kleine K."/>
            <person name="Mewes H.-W."/>
            <person name="Zollner A."/>
            <person name="Zaccaria P."/>
        </authorList>
    </citation>
    <scope>NUCLEOTIDE SEQUENCE [LARGE SCALE GENOMIC DNA]</scope>
    <source>
        <strain>ATCC 204508 / S288c</strain>
    </source>
</reference>
<reference key="3">
    <citation type="journal article" date="2014" name="G3 (Bethesda)">
        <title>The reference genome sequence of Saccharomyces cerevisiae: Then and now.</title>
        <authorList>
            <person name="Engel S.R."/>
            <person name="Dietrich F.S."/>
            <person name="Fisk D.G."/>
            <person name="Binkley G."/>
            <person name="Balakrishnan R."/>
            <person name="Costanzo M.C."/>
            <person name="Dwight S.S."/>
            <person name="Hitz B.C."/>
            <person name="Karra K."/>
            <person name="Nash R.S."/>
            <person name="Weng S."/>
            <person name="Wong E.D."/>
            <person name="Lloyd P."/>
            <person name="Skrzypek M.S."/>
            <person name="Miyasato S.R."/>
            <person name="Simison M."/>
            <person name="Cherry J.M."/>
        </authorList>
    </citation>
    <scope>GENOME REANNOTATION</scope>
    <source>
        <strain>ATCC 204508 / S288c</strain>
    </source>
</reference>
<name>YD158_YEAST</name>